<sequence>MLTYKQRQSLNHAICDYVRQNEGSDELLVQLESVLLPNGSDVIPQDPNLLERKWNSIVRLQSKIMELEKNCEELQKSIDEQQSSTNQISNASSDWCPRDTPSFQITLDASITALCLHPSLPIIFIGLDSGKLLRYDILNVELPLQSTMAHMDGITSISISLPNENGRPAYLATTSKDLNTKIWELELDSTLSHIKTLAGHEHTVSDCQFFERGADLLLATCSRDLYLKIWDISNGWCIKSFQPHTQWIRSLHVHGEFVLTGSNDSAIRLTHWPSGNGLSMGIGHDFPVEKVLILIPDPQHLQPQYQPLGFQHVASASRDGTIRLWKVSLPKFIPHRPPRPNPLDTTFKVIAVLTDHNSWVRDLRQFNDMLFSCSDDGSVKCWSLDWTNLSTTTCKKSWDLSNKGFQNCLTLDNIAFTGLPSRKLLFSGSSEGTLTSFMR</sequence>
<name>LIS1_KLULA</name>
<accession>Q6CU55</accession>
<proteinExistence type="inferred from homology"/>
<keyword id="KW-0131">Cell cycle</keyword>
<keyword id="KW-0132">Cell division</keyword>
<keyword id="KW-0175">Coiled coil</keyword>
<keyword id="KW-0963">Cytoplasm</keyword>
<keyword id="KW-0206">Cytoskeleton</keyword>
<keyword id="KW-0493">Microtubule</keyword>
<keyword id="KW-0498">Mitosis</keyword>
<keyword id="KW-1185">Reference proteome</keyword>
<keyword id="KW-0677">Repeat</keyword>
<keyword id="KW-0813">Transport</keyword>
<keyword id="KW-0853">WD repeat</keyword>
<feature type="chain" id="PRO_0000405080" description="Nuclear distribution protein PAC1">
    <location>
        <begin position="1"/>
        <end position="439"/>
    </location>
</feature>
<feature type="repeat" description="WD 1">
    <location>
        <begin position="106"/>
        <end position="145"/>
    </location>
</feature>
<feature type="repeat" description="WD 2">
    <location>
        <begin position="149"/>
        <end position="193"/>
    </location>
</feature>
<feature type="repeat" description="WD 3">
    <location>
        <begin position="199"/>
        <end position="240"/>
    </location>
</feature>
<feature type="repeat" description="WD 4">
    <location>
        <begin position="243"/>
        <end position="282"/>
    </location>
</feature>
<feature type="repeat" description="WD 5">
    <location>
        <begin position="295"/>
        <end position="335"/>
    </location>
</feature>
<feature type="repeat" description="WD 6">
    <location>
        <begin position="355"/>
        <end position="392"/>
    </location>
</feature>
<feature type="repeat" description="WD 7">
    <location>
        <begin position="402"/>
        <end position="438"/>
    </location>
</feature>
<feature type="coiled-coil region" evidence="1">
    <location>
        <begin position="55"/>
        <end position="90"/>
    </location>
</feature>
<gene>
    <name evidence="1" type="primary">PAC1</name>
    <name evidence="1" type="synonym">LIS1</name>
    <name type="ordered locus">KLLA0C07513g</name>
</gene>
<protein>
    <recommendedName>
        <fullName evidence="1">Nuclear distribution protein PAC1</fullName>
    </recommendedName>
    <alternativeName>
        <fullName evidence="1">Lissencephaly-1 homolog</fullName>
        <shortName evidence="1">LIS-1</shortName>
    </alternativeName>
    <alternativeName>
        <fullName evidence="1">nudF homolog</fullName>
    </alternativeName>
</protein>
<evidence type="ECO:0000255" key="1">
    <source>
        <dbReference type="HAMAP-Rule" id="MF_03141"/>
    </source>
</evidence>
<dbReference type="EMBL" id="CR382123">
    <property type="protein sequence ID" value="CAH01385.1"/>
    <property type="molecule type" value="Genomic_DNA"/>
</dbReference>
<dbReference type="RefSeq" id="XP_452534.1">
    <property type="nucleotide sequence ID" value="XM_452534.1"/>
</dbReference>
<dbReference type="SMR" id="Q6CU55"/>
<dbReference type="FunCoup" id="Q6CU55">
    <property type="interactions" value="82"/>
</dbReference>
<dbReference type="STRING" id="284590.Q6CU55"/>
<dbReference type="PaxDb" id="284590-Q6CU55"/>
<dbReference type="KEGG" id="kla:KLLA0_C07513g"/>
<dbReference type="eggNOG" id="KOG0295">
    <property type="taxonomic scope" value="Eukaryota"/>
</dbReference>
<dbReference type="HOGENOM" id="CLU_000288_57_15_1"/>
<dbReference type="InParanoid" id="Q6CU55"/>
<dbReference type="OMA" id="RGTCLMT"/>
<dbReference type="Proteomes" id="UP000000598">
    <property type="component" value="Chromosome C"/>
</dbReference>
<dbReference type="GO" id="GO:0005737">
    <property type="term" value="C:cytoplasm"/>
    <property type="evidence" value="ECO:0007669"/>
    <property type="project" value="UniProtKB-UniRule"/>
</dbReference>
<dbReference type="GO" id="GO:0005874">
    <property type="term" value="C:microtubule"/>
    <property type="evidence" value="ECO:0007669"/>
    <property type="project" value="UniProtKB-KW"/>
</dbReference>
<dbReference type="GO" id="GO:0005875">
    <property type="term" value="C:microtubule associated complex"/>
    <property type="evidence" value="ECO:0007669"/>
    <property type="project" value="UniProtKB-UniRule"/>
</dbReference>
<dbReference type="GO" id="GO:0000922">
    <property type="term" value="C:spindle pole"/>
    <property type="evidence" value="ECO:0007669"/>
    <property type="project" value="UniProtKB-SubCell"/>
</dbReference>
<dbReference type="GO" id="GO:1990234">
    <property type="term" value="C:transferase complex"/>
    <property type="evidence" value="ECO:0007669"/>
    <property type="project" value="UniProtKB-ARBA"/>
</dbReference>
<dbReference type="GO" id="GO:0070840">
    <property type="term" value="F:dynein complex binding"/>
    <property type="evidence" value="ECO:0007669"/>
    <property type="project" value="UniProtKB-UniRule"/>
</dbReference>
<dbReference type="GO" id="GO:0051301">
    <property type="term" value="P:cell division"/>
    <property type="evidence" value="ECO:0007669"/>
    <property type="project" value="UniProtKB-KW"/>
</dbReference>
<dbReference type="GO" id="GO:0000132">
    <property type="term" value="P:establishment of mitotic spindle orientation"/>
    <property type="evidence" value="ECO:0007669"/>
    <property type="project" value="UniProtKB-UniRule"/>
</dbReference>
<dbReference type="GO" id="GO:0051012">
    <property type="term" value="P:microtubule sliding"/>
    <property type="evidence" value="ECO:0007669"/>
    <property type="project" value="UniProtKB-UniRule"/>
</dbReference>
<dbReference type="Gene3D" id="1.20.960.30">
    <property type="match status" value="1"/>
</dbReference>
<dbReference type="Gene3D" id="2.130.10.10">
    <property type="entry name" value="YVTN repeat-like/Quinoprotein amine dehydrogenase"/>
    <property type="match status" value="1"/>
</dbReference>
<dbReference type="HAMAP" id="MF_03141">
    <property type="entry name" value="lis1"/>
    <property type="match status" value="1"/>
</dbReference>
<dbReference type="InterPro" id="IPR017252">
    <property type="entry name" value="Dynein_regulator_LIS1"/>
</dbReference>
<dbReference type="InterPro" id="IPR020472">
    <property type="entry name" value="G-protein_beta_WD-40_rep"/>
</dbReference>
<dbReference type="InterPro" id="IPR037190">
    <property type="entry name" value="LIS1_N"/>
</dbReference>
<dbReference type="InterPro" id="IPR015943">
    <property type="entry name" value="WD40/YVTN_repeat-like_dom_sf"/>
</dbReference>
<dbReference type="InterPro" id="IPR019775">
    <property type="entry name" value="WD40_repeat_CS"/>
</dbReference>
<dbReference type="InterPro" id="IPR036322">
    <property type="entry name" value="WD40_repeat_dom_sf"/>
</dbReference>
<dbReference type="InterPro" id="IPR001680">
    <property type="entry name" value="WD40_rpt"/>
</dbReference>
<dbReference type="PANTHER" id="PTHR22847:SF637">
    <property type="entry name" value="WD REPEAT DOMAIN 5B"/>
    <property type="match status" value="1"/>
</dbReference>
<dbReference type="PANTHER" id="PTHR22847">
    <property type="entry name" value="WD40 REPEAT PROTEIN"/>
    <property type="match status" value="1"/>
</dbReference>
<dbReference type="Pfam" id="PF00400">
    <property type="entry name" value="WD40"/>
    <property type="match status" value="4"/>
</dbReference>
<dbReference type="PIRSF" id="PIRSF037647">
    <property type="entry name" value="Dynein_regulator_Lis1"/>
    <property type="match status" value="1"/>
</dbReference>
<dbReference type="PRINTS" id="PR00320">
    <property type="entry name" value="GPROTEINBRPT"/>
</dbReference>
<dbReference type="SMART" id="SM00320">
    <property type="entry name" value="WD40"/>
    <property type="match status" value="7"/>
</dbReference>
<dbReference type="SUPFAM" id="SSF109925">
    <property type="entry name" value="Lissencephaly-1 protein (Lis-1, PAF-AH alpha) N-terminal domain"/>
    <property type="match status" value="1"/>
</dbReference>
<dbReference type="SUPFAM" id="SSF50978">
    <property type="entry name" value="WD40 repeat-like"/>
    <property type="match status" value="1"/>
</dbReference>
<dbReference type="PROSITE" id="PS00678">
    <property type="entry name" value="WD_REPEATS_1"/>
    <property type="match status" value="2"/>
</dbReference>
<dbReference type="PROSITE" id="PS50082">
    <property type="entry name" value="WD_REPEATS_2"/>
    <property type="match status" value="2"/>
</dbReference>
<dbReference type="PROSITE" id="PS50294">
    <property type="entry name" value="WD_REPEATS_REGION"/>
    <property type="match status" value="1"/>
</dbReference>
<organism>
    <name type="scientific">Kluyveromyces lactis (strain ATCC 8585 / CBS 2359 / DSM 70799 / NBRC 1267 / NRRL Y-1140 / WM37)</name>
    <name type="common">Yeast</name>
    <name type="synonym">Candida sphaerica</name>
    <dbReference type="NCBI Taxonomy" id="284590"/>
    <lineage>
        <taxon>Eukaryota</taxon>
        <taxon>Fungi</taxon>
        <taxon>Dikarya</taxon>
        <taxon>Ascomycota</taxon>
        <taxon>Saccharomycotina</taxon>
        <taxon>Saccharomycetes</taxon>
        <taxon>Saccharomycetales</taxon>
        <taxon>Saccharomycetaceae</taxon>
        <taxon>Kluyveromyces</taxon>
    </lineage>
</organism>
<comment type="function">
    <text evidence="1">Positively regulates the activity of the minus-end directed microtubule motor protein dynein. Plays a central role in positioning the mitotic spindle at the bud neck during cell division. Targets cytoplasmic dynein to microtubule plus ends, thereby promoting dynein-mediated microtubule sliding along the bud cortex and consequently the movement of the mitotic spindle to the bud neck.</text>
</comment>
<comment type="subunit">
    <text evidence="1">Self-associates. Interacts with NDL1 and dynein.</text>
</comment>
<comment type="subcellular location">
    <subcellularLocation>
        <location evidence="1">Cytoplasm</location>
        <location evidence="1">Cytoskeleton</location>
    </subcellularLocation>
    <subcellularLocation>
        <location evidence="1">Cytoplasm</location>
        <location evidence="1">Cytoskeleton</location>
        <location evidence="1">Spindle pole</location>
    </subcellularLocation>
    <text evidence="1">Localizes to the plus ends of microtubules and the mitotic spindle poles.</text>
</comment>
<comment type="similarity">
    <text evidence="1">Belongs to the WD repeat LIS1/nudF family.</text>
</comment>
<reference key="1">
    <citation type="journal article" date="2004" name="Nature">
        <title>Genome evolution in yeasts.</title>
        <authorList>
            <person name="Dujon B."/>
            <person name="Sherman D."/>
            <person name="Fischer G."/>
            <person name="Durrens P."/>
            <person name="Casaregola S."/>
            <person name="Lafontaine I."/>
            <person name="de Montigny J."/>
            <person name="Marck C."/>
            <person name="Neuveglise C."/>
            <person name="Talla E."/>
            <person name="Goffard N."/>
            <person name="Frangeul L."/>
            <person name="Aigle M."/>
            <person name="Anthouard V."/>
            <person name="Babour A."/>
            <person name="Barbe V."/>
            <person name="Barnay S."/>
            <person name="Blanchin S."/>
            <person name="Beckerich J.-M."/>
            <person name="Beyne E."/>
            <person name="Bleykasten C."/>
            <person name="Boisrame A."/>
            <person name="Boyer J."/>
            <person name="Cattolico L."/>
            <person name="Confanioleri F."/>
            <person name="de Daruvar A."/>
            <person name="Despons L."/>
            <person name="Fabre E."/>
            <person name="Fairhead C."/>
            <person name="Ferry-Dumazet H."/>
            <person name="Groppi A."/>
            <person name="Hantraye F."/>
            <person name="Hennequin C."/>
            <person name="Jauniaux N."/>
            <person name="Joyet P."/>
            <person name="Kachouri R."/>
            <person name="Kerrest A."/>
            <person name="Koszul R."/>
            <person name="Lemaire M."/>
            <person name="Lesur I."/>
            <person name="Ma L."/>
            <person name="Muller H."/>
            <person name="Nicaud J.-M."/>
            <person name="Nikolski M."/>
            <person name="Oztas S."/>
            <person name="Ozier-Kalogeropoulos O."/>
            <person name="Pellenz S."/>
            <person name="Potier S."/>
            <person name="Richard G.-F."/>
            <person name="Straub M.-L."/>
            <person name="Suleau A."/>
            <person name="Swennen D."/>
            <person name="Tekaia F."/>
            <person name="Wesolowski-Louvel M."/>
            <person name="Westhof E."/>
            <person name="Wirth B."/>
            <person name="Zeniou-Meyer M."/>
            <person name="Zivanovic Y."/>
            <person name="Bolotin-Fukuhara M."/>
            <person name="Thierry A."/>
            <person name="Bouchier C."/>
            <person name="Caudron B."/>
            <person name="Scarpelli C."/>
            <person name="Gaillardin C."/>
            <person name="Weissenbach J."/>
            <person name="Wincker P."/>
            <person name="Souciet J.-L."/>
        </authorList>
    </citation>
    <scope>NUCLEOTIDE SEQUENCE [LARGE SCALE GENOMIC DNA]</scope>
    <source>
        <strain>ATCC 8585 / CBS 2359 / DSM 70799 / NBRC 1267 / NRRL Y-1140 / WM37</strain>
    </source>
</reference>